<accession>Q8CNX4</accession>
<reference key="1">
    <citation type="journal article" date="2003" name="Mol. Microbiol.">
        <title>Genome-based analysis of virulence genes in a non-biofilm-forming Staphylococcus epidermidis strain (ATCC 12228).</title>
        <authorList>
            <person name="Zhang Y.-Q."/>
            <person name="Ren S.-X."/>
            <person name="Li H.-L."/>
            <person name="Wang Y.-X."/>
            <person name="Fu G."/>
            <person name="Yang J."/>
            <person name="Qin Z.-Q."/>
            <person name="Miao Y.-G."/>
            <person name="Wang W.-Y."/>
            <person name="Chen R.-S."/>
            <person name="Shen Y."/>
            <person name="Chen Z."/>
            <person name="Yuan Z.-H."/>
            <person name="Zhao G.-P."/>
            <person name="Qu D."/>
            <person name="Danchin A."/>
            <person name="Wen Y.-M."/>
        </authorList>
    </citation>
    <scope>NUCLEOTIDE SEQUENCE [LARGE SCALE GENOMIC DNA]</scope>
    <source>
        <strain>ATCC 12228 / FDA PCI 1200</strain>
    </source>
</reference>
<feature type="chain" id="PRO_0000083565" description="Isocitrate dehydrogenase [NADP]">
    <location>
        <begin position="1"/>
        <end position="422"/>
    </location>
</feature>
<feature type="binding site" evidence="1">
    <location>
        <position position="94"/>
    </location>
    <ligand>
        <name>NADP(+)</name>
        <dbReference type="ChEBI" id="CHEBI:58349"/>
    </ligand>
</feature>
<feature type="binding site" evidence="1">
    <location>
        <position position="103"/>
    </location>
    <ligand>
        <name>D-threo-isocitrate</name>
        <dbReference type="ChEBI" id="CHEBI:15562"/>
    </ligand>
</feature>
<feature type="binding site" evidence="1">
    <location>
        <position position="105"/>
    </location>
    <ligand>
        <name>D-threo-isocitrate</name>
        <dbReference type="ChEBI" id="CHEBI:15562"/>
    </ligand>
</feature>
<feature type="binding site" evidence="1">
    <location>
        <position position="109"/>
    </location>
    <ligand>
        <name>D-threo-isocitrate</name>
        <dbReference type="ChEBI" id="CHEBI:15562"/>
    </ligand>
</feature>
<feature type="binding site" evidence="1">
    <location>
        <position position="119"/>
    </location>
    <ligand>
        <name>D-threo-isocitrate</name>
        <dbReference type="ChEBI" id="CHEBI:15562"/>
    </ligand>
</feature>
<feature type="binding site" evidence="1">
    <location>
        <position position="143"/>
    </location>
    <ligand>
        <name>D-threo-isocitrate</name>
        <dbReference type="ChEBI" id="CHEBI:15562"/>
    </ligand>
</feature>
<feature type="binding site" evidence="1">
    <location>
        <position position="310"/>
    </location>
    <ligand>
        <name>Mg(2+)</name>
        <dbReference type="ChEBI" id="CHEBI:18420"/>
    </ligand>
</feature>
<feature type="binding site" evidence="1">
    <location>
        <begin position="344"/>
        <end position="350"/>
    </location>
    <ligand>
        <name>NADP(+)</name>
        <dbReference type="ChEBI" id="CHEBI:58349"/>
    </ligand>
</feature>
<feature type="binding site" evidence="1">
    <location>
        <position position="357"/>
    </location>
    <ligand>
        <name>NADP(+)</name>
        <dbReference type="ChEBI" id="CHEBI:58349"/>
    </ligand>
</feature>
<feature type="binding site" evidence="1">
    <location>
        <position position="396"/>
    </location>
    <ligand>
        <name>NADP(+)</name>
        <dbReference type="ChEBI" id="CHEBI:58349"/>
    </ligand>
</feature>
<feature type="binding site" evidence="1">
    <location>
        <position position="400"/>
    </location>
    <ligand>
        <name>NADP(+)</name>
        <dbReference type="ChEBI" id="CHEBI:58349"/>
    </ligand>
</feature>
<feature type="site" description="Critical for catalysis" evidence="1">
    <location>
        <position position="150"/>
    </location>
</feature>
<feature type="site" description="Critical for catalysis" evidence="1">
    <location>
        <position position="220"/>
    </location>
</feature>
<sequence>MSAEKITQSKDGLNVPNEPIIPFIIGDGIGPDIWKAASRVIDAAVEKAYNGEKRIEWKEVLAGQKAYDETGEWLPQETLETIKEYLIAVKGPLTTPIGGGIRSLNVALRQELDLFTCLRPVRWFKGVPSPVKRPEDVDMVIFRENTEDIYAGIEFKQGTSEVKKVIDFLQNEMGATNIRFPETSGIGIKPVSKEGTERLVRAAIQYALDNNRKSVTLVHKGNIMKFTEGSFKQWGYDLAHNEFGDKVFTWQQYDEIVEQKGKDAANEAQSKAEQEGKIIIKDSIADIFLQQILTRPAEHDVVATMNLNGDYISDALAAQVGGIGIAPGANINYETGHAIFEATHGTAPKYAGLNKVNPSSEILSSVLMLEHLGWQEAADKITDSIEATIASKIVTYDFARLMDGAKEVSTSDFADELIKNIR</sequence>
<name>IDH_STAES</name>
<organism>
    <name type="scientific">Staphylococcus epidermidis (strain ATCC 12228 / FDA PCI 1200)</name>
    <dbReference type="NCBI Taxonomy" id="176280"/>
    <lineage>
        <taxon>Bacteria</taxon>
        <taxon>Bacillati</taxon>
        <taxon>Bacillota</taxon>
        <taxon>Bacilli</taxon>
        <taxon>Bacillales</taxon>
        <taxon>Staphylococcaceae</taxon>
        <taxon>Staphylococcus</taxon>
    </lineage>
</organism>
<gene>
    <name type="primary">icd</name>
    <name type="synonym">citC</name>
    <name type="ordered locus">SE_1370</name>
</gene>
<evidence type="ECO:0000250" key="1">
    <source>
        <dbReference type="UniProtKB" id="P08200"/>
    </source>
</evidence>
<evidence type="ECO:0000305" key="2"/>
<proteinExistence type="inferred from homology"/>
<dbReference type="EC" id="1.1.1.42" evidence="1"/>
<dbReference type="EMBL" id="AE015929">
    <property type="protein sequence ID" value="AAO04969.1"/>
    <property type="molecule type" value="Genomic_DNA"/>
</dbReference>
<dbReference type="RefSeq" id="NP_764925.1">
    <property type="nucleotide sequence ID" value="NC_004461.1"/>
</dbReference>
<dbReference type="RefSeq" id="WP_001830826.1">
    <property type="nucleotide sequence ID" value="NZ_WBME01000042.1"/>
</dbReference>
<dbReference type="SMR" id="Q8CNX4"/>
<dbReference type="GeneID" id="50018516"/>
<dbReference type="KEGG" id="sep:SE_1370"/>
<dbReference type="PATRIC" id="fig|176280.10.peg.1338"/>
<dbReference type="eggNOG" id="COG0538">
    <property type="taxonomic scope" value="Bacteria"/>
</dbReference>
<dbReference type="HOGENOM" id="CLU_031953_7_1_9"/>
<dbReference type="OrthoDB" id="9806254at2"/>
<dbReference type="Proteomes" id="UP000001411">
    <property type="component" value="Chromosome"/>
</dbReference>
<dbReference type="GO" id="GO:0004450">
    <property type="term" value="F:isocitrate dehydrogenase (NADP+) activity"/>
    <property type="evidence" value="ECO:0007669"/>
    <property type="project" value="UniProtKB-EC"/>
</dbReference>
<dbReference type="GO" id="GO:0000287">
    <property type="term" value="F:magnesium ion binding"/>
    <property type="evidence" value="ECO:0007669"/>
    <property type="project" value="InterPro"/>
</dbReference>
<dbReference type="GO" id="GO:0051287">
    <property type="term" value="F:NAD binding"/>
    <property type="evidence" value="ECO:0007669"/>
    <property type="project" value="InterPro"/>
</dbReference>
<dbReference type="GO" id="GO:0006097">
    <property type="term" value="P:glyoxylate cycle"/>
    <property type="evidence" value="ECO:0007669"/>
    <property type="project" value="UniProtKB-KW"/>
</dbReference>
<dbReference type="GO" id="GO:0006099">
    <property type="term" value="P:tricarboxylic acid cycle"/>
    <property type="evidence" value="ECO:0007669"/>
    <property type="project" value="UniProtKB-KW"/>
</dbReference>
<dbReference type="Gene3D" id="3.40.718.10">
    <property type="entry name" value="Isopropylmalate Dehydrogenase"/>
    <property type="match status" value="1"/>
</dbReference>
<dbReference type="InterPro" id="IPR019818">
    <property type="entry name" value="IsoCit/isopropylmalate_DH_CS"/>
</dbReference>
<dbReference type="InterPro" id="IPR004439">
    <property type="entry name" value="Isocitrate_DH_NADP_dimer_prok"/>
</dbReference>
<dbReference type="InterPro" id="IPR024084">
    <property type="entry name" value="IsoPropMal-DH-like_dom"/>
</dbReference>
<dbReference type="NCBIfam" id="NF005425">
    <property type="entry name" value="PRK07006.1"/>
    <property type="match status" value="1"/>
</dbReference>
<dbReference type="NCBIfam" id="TIGR00183">
    <property type="entry name" value="prok_nadp_idh"/>
    <property type="match status" value="1"/>
</dbReference>
<dbReference type="PANTHER" id="PTHR43504">
    <property type="entry name" value="ISOCITRATE DEHYDROGENASE [NADP]"/>
    <property type="match status" value="1"/>
</dbReference>
<dbReference type="PANTHER" id="PTHR43504:SF1">
    <property type="entry name" value="ISOCITRATE DEHYDROGENASE [NADP]"/>
    <property type="match status" value="1"/>
</dbReference>
<dbReference type="Pfam" id="PF00180">
    <property type="entry name" value="Iso_dh"/>
    <property type="match status" value="1"/>
</dbReference>
<dbReference type="SMART" id="SM01329">
    <property type="entry name" value="Iso_dh"/>
    <property type="match status" value="1"/>
</dbReference>
<dbReference type="SUPFAM" id="SSF53659">
    <property type="entry name" value="Isocitrate/Isopropylmalate dehydrogenase-like"/>
    <property type="match status" value="1"/>
</dbReference>
<dbReference type="PROSITE" id="PS00470">
    <property type="entry name" value="IDH_IMDH"/>
    <property type="match status" value="1"/>
</dbReference>
<comment type="function">
    <text evidence="1">Catalyzes the oxidative decarboxylation of isocitrate to 2-oxoglutarate and carbon dioxide with the concomitant reduction of NADP(+).</text>
</comment>
<comment type="catalytic activity">
    <reaction evidence="1">
        <text>D-threo-isocitrate + NADP(+) = 2-oxoglutarate + CO2 + NADPH</text>
        <dbReference type="Rhea" id="RHEA:19629"/>
        <dbReference type="ChEBI" id="CHEBI:15562"/>
        <dbReference type="ChEBI" id="CHEBI:16526"/>
        <dbReference type="ChEBI" id="CHEBI:16810"/>
        <dbReference type="ChEBI" id="CHEBI:57783"/>
        <dbReference type="ChEBI" id="CHEBI:58349"/>
        <dbReference type="EC" id="1.1.1.42"/>
    </reaction>
</comment>
<comment type="cofactor">
    <cofactor evidence="1">
        <name>Mg(2+)</name>
        <dbReference type="ChEBI" id="CHEBI:18420"/>
    </cofactor>
    <cofactor evidence="1">
        <name>Mn(2+)</name>
        <dbReference type="ChEBI" id="CHEBI:29035"/>
    </cofactor>
    <text evidence="1">Binds 1 Mg(2+) or Mn(2+) ion per subunit.</text>
</comment>
<comment type="subunit">
    <text evidence="1">Homodimer.</text>
</comment>
<comment type="similarity">
    <text evidence="2">Belongs to the isocitrate and isopropylmalate dehydrogenases family.</text>
</comment>
<keyword id="KW-0329">Glyoxylate bypass</keyword>
<keyword id="KW-0460">Magnesium</keyword>
<keyword id="KW-0464">Manganese</keyword>
<keyword id="KW-0479">Metal-binding</keyword>
<keyword id="KW-0521">NADP</keyword>
<keyword id="KW-0560">Oxidoreductase</keyword>
<keyword id="KW-0816">Tricarboxylic acid cycle</keyword>
<protein>
    <recommendedName>
        <fullName>Isocitrate dehydrogenase [NADP]</fullName>
        <shortName>IDH</shortName>
        <ecNumber evidence="1">1.1.1.42</ecNumber>
    </recommendedName>
    <alternativeName>
        <fullName>IDP</fullName>
    </alternativeName>
    <alternativeName>
        <fullName>NADP(+)-specific ICDH</fullName>
    </alternativeName>
    <alternativeName>
        <fullName>Oxalosuccinate decarboxylase</fullName>
    </alternativeName>
</protein>